<name>SYT17_RAT</name>
<dbReference type="EMBL" id="U30831">
    <property type="protein sequence ID" value="AAC52379.1"/>
    <property type="molecule type" value="mRNA"/>
</dbReference>
<dbReference type="PIR" id="S68695">
    <property type="entry name" value="S68695"/>
</dbReference>
<dbReference type="RefSeq" id="NP_620204.1">
    <property type="nucleotide sequence ID" value="NM_138849.2"/>
</dbReference>
<dbReference type="SMR" id="Q62807"/>
<dbReference type="FunCoup" id="Q62807">
    <property type="interactions" value="234"/>
</dbReference>
<dbReference type="STRING" id="10116.ENSRNOP00000023090"/>
<dbReference type="iPTMnet" id="Q62807"/>
<dbReference type="PhosphoSitePlus" id="Q62807"/>
<dbReference type="SwissPalm" id="Q62807"/>
<dbReference type="PaxDb" id="10116-ENSRNOP00000023090"/>
<dbReference type="Ensembl" id="ENSRNOT00000023090.5">
    <property type="protein sequence ID" value="ENSRNOP00000023090.4"/>
    <property type="gene ID" value="ENSRNOG00000017136.7"/>
</dbReference>
<dbReference type="GeneID" id="192189"/>
<dbReference type="KEGG" id="rno:192189"/>
<dbReference type="UCSC" id="RGD:708576">
    <property type="organism name" value="rat"/>
</dbReference>
<dbReference type="AGR" id="RGD:708576"/>
<dbReference type="CTD" id="51760"/>
<dbReference type="RGD" id="708576">
    <property type="gene designation" value="Syt17"/>
</dbReference>
<dbReference type="eggNOG" id="KOG1028">
    <property type="taxonomic scope" value="Eukaryota"/>
</dbReference>
<dbReference type="GeneTree" id="ENSGT00940000158939"/>
<dbReference type="HOGENOM" id="CLU_023008_9_0_1"/>
<dbReference type="InParanoid" id="Q62807"/>
<dbReference type="OMA" id="PESSHWR"/>
<dbReference type="OrthoDB" id="68846at9989"/>
<dbReference type="PhylomeDB" id="Q62807"/>
<dbReference type="TreeFam" id="TF315600"/>
<dbReference type="PRO" id="PR:Q62807"/>
<dbReference type="Proteomes" id="UP000002494">
    <property type="component" value="Chromosome 1"/>
</dbReference>
<dbReference type="Bgee" id="ENSRNOG00000017136">
    <property type="expression patterns" value="Expressed in frontal cortex and 18 other cell types or tissues"/>
</dbReference>
<dbReference type="ExpressionAtlas" id="Q62807">
    <property type="expression patterns" value="baseline and differential"/>
</dbReference>
<dbReference type="GO" id="GO:0070382">
    <property type="term" value="C:exocytic vesicle"/>
    <property type="evidence" value="ECO:0000318"/>
    <property type="project" value="GO_Central"/>
</dbReference>
<dbReference type="GO" id="GO:0098978">
    <property type="term" value="C:glutamatergic synapse"/>
    <property type="evidence" value="ECO:0000266"/>
    <property type="project" value="RGD"/>
</dbReference>
<dbReference type="GO" id="GO:0005886">
    <property type="term" value="C:plasma membrane"/>
    <property type="evidence" value="ECO:0000318"/>
    <property type="project" value="GO_Central"/>
</dbReference>
<dbReference type="GO" id="GO:0098794">
    <property type="term" value="C:postsynapse"/>
    <property type="evidence" value="ECO:0000266"/>
    <property type="project" value="RGD"/>
</dbReference>
<dbReference type="GO" id="GO:0005802">
    <property type="term" value="C:trans-Golgi network"/>
    <property type="evidence" value="ECO:0000266"/>
    <property type="project" value="RGD"/>
</dbReference>
<dbReference type="GO" id="GO:0061891">
    <property type="term" value="F:calcium ion sensor activity"/>
    <property type="evidence" value="ECO:0000318"/>
    <property type="project" value="GO_Central"/>
</dbReference>
<dbReference type="GO" id="GO:0005544">
    <property type="term" value="F:calcium-dependent phospholipid binding"/>
    <property type="evidence" value="ECO:0000318"/>
    <property type="project" value="GO_Central"/>
</dbReference>
<dbReference type="GO" id="GO:0000149">
    <property type="term" value="F:SNARE binding"/>
    <property type="evidence" value="ECO:0000318"/>
    <property type="project" value="GO_Central"/>
</dbReference>
<dbReference type="GO" id="GO:0030154">
    <property type="term" value="P:cell differentiation"/>
    <property type="evidence" value="ECO:0007669"/>
    <property type="project" value="UniProtKB-KW"/>
</dbReference>
<dbReference type="GO" id="GO:1903861">
    <property type="term" value="P:positive regulation of dendrite extension"/>
    <property type="evidence" value="ECO:0000266"/>
    <property type="project" value="RGD"/>
</dbReference>
<dbReference type="GO" id="GO:0017158">
    <property type="term" value="P:regulation of calcium ion-dependent exocytosis"/>
    <property type="evidence" value="ECO:0000318"/>
    <property type="project" value="GO_Central"/>
</dbReference>
<dbReference type="GO" id="GO:0099149">
    <property type="term" value="P:regulation of postsynaptic neurotransmitter receptor internalization"/>
    <property type="evidence" value="ECO:0000266"/>
    <property type="project" value="RGD"/>
</dbReference>
<dbReference type="GO" id="GO:0016192">
    <property type="term" value="P:vesicle-mediated transport"/>
    <property type="evidence" value="ECO:0000318"/>
    <property type="project" value="GO_Central"/>
</dbReference>
<dbReference type="CDD" id="cd08390">
    <property type="entry name" value="C2A_Synaptotagmin-15-17"/>
    <property type="match status" value="1"/>
</dbReference>
<dbReference type="CDD" id="cd08410">
    <property type="entry name" value="C2B_Synaptotagmin-17"/>
    <property type="match status" value="1"/>
</dbReference>
<dbReference type="FunFam" id="2.60.40.150:FF:000053">
    <property type="entry name" value="synaptotagmin-17 isoform X1"/>
    <property type="match status" value="1"/>
</dbReference>
<dbReference type="FunFam" id="2.60.40.150:FF:000064">
    <property type="entry name" value="synaptotagmin-17 isoform X1"/>
    <property type="match status" value="1"/>
</dbReference>
<dbReference type="Gene3D" id="2.60.40.150">
    <property type="entry name" value="C2 domain"/>
    <property type="match status" value="2"/>
</dbReference>
<dbReference type="InterPro" id="IPR000008">
    <property type="entry name" value="C2_dom"/>
</dbReference>
<dbReference type="InterPro" id="IPR035892">
    <property type="entry name" value="C2_domain_sf"/>
</dbReference>
<dbReference type="InterPro" id="IPR001565">
    <property type="entry name" value="Synaptotagmin"/>
</dbReference>
<dbReference type="InterPro" id="IPR047897">
    <property type="entry name" value="Synaptotagmin-15/17_C2A"/>
</dbReference>
<dbReference type="InterPro" id="IPR014705">
    <property type="entry name" value="Syt17_C2B"/>
</dbReference>
<dbReference type="PANTHER" id="PTHR10024">
    <property type="entry name" value="SYNAPTOTAGMIN"/>
    <property type="match status" value="1"/>
</dbReference>
<dbReference type="PANTHER" id="PTHR10024:SF348">
    <property type="entry name" value="SYNAPTOTAGMIN-17"/>
    <property type="match status" value="1"/>
</dbReference>
<dbReference type="Pfam" id="PF00168">
    <property type="entry name" value="C2"/>
    <property type="match status" value="2"/>
</dbReference>
<dbReference type="PRINTS" id="PR00399">
    <property type="entry name" value="SYNAPTOTAGMN"/>
</dbReference>
<dbReference type="SMART" id="SM00239">
    <property type="entry name" value="C2"/>
    <property type="match status" value="2"/>
</dbReference>
<dbReference type="SUPFAM" id="SSF49562">
    <property type="entry name" value="C2 domain (Calcium/lipid-binding domain, CaLB)"/>
    <property type="match status" value="2"/>
</dbReference>
<dbReference type="PROSITE" id="PS50004">
    <property type="entry name" value="C2"/>
    <property type="match status" value="2"/>
</dbReference>
<evidence type="ECO:0000250" key="1"/>
<evidence type="ECO:0000250" key="2">
    <source>
        <dbReference type="UniProtKB" id="Q9BSW7"/>
    </source>
</evidence>
<evidence type="ECO:0000255" key="3">
    <source>
        <dbReference type="PROSITE-ProRule" id="PRU00041"/>
    </source>
</evidence>
<evidence type="ECO:0000256" key="4">
    <source>
        <dbReference type="SAM" id="MobiDB-lite"/>
    </source>
</evidence>
<evidence type="ECO:0000269" key="5">
    <source>
    </source>
</evidence>
<evidence type="ECO:0000305" key="6"/>
<evidence type="ECO:0007744" key="7">
    <source>
    </source>
</evidence>
<reference key="1">
    <citation type="journal article" date="1996" name="FEBS Lett.">
        <title>Identification of a novel protein containing two C2 domains selectively expressed in the rat brain and kidney.</title>
        <authorList>
            <person name="Kwon O.J."/>
            <person name="Gainer H."/>
            <person name="Wray S."/>
            <person name="Chin H."/>
        </authorList>
    </citation>
    <scope>NUCLEOTIDE SEQUENCE [MRNA]</scope>
    <scope>TISSUE SPECIFICITY</scope>
    <source>
        <strain>Sprague-Dawley</strain>
        <tissue>Brain</tissue>
        <tissue>Hypothalamus</tissue>
    </source>
</reference>
<reference key="2">
    <citation type="journal article" date="2012" name="Nat. Commun.">
        <title>Quantitative maps of protein phosphorylation sites across 14 different rat organs and tissues.</title>
        <authorList>
            <person name="Lundby A."/>
            <person name="Secher A."/>
            <person name="Lage K."/>
            <person name="Nordsborg N.B."/>
            <person name="Dmytriyev A."/>
            <person name="Lundby C."/>
            <person name="Olsen J.V."/>
        </authorList>
    </citation>
    <scope>PHOSPHORYLATION [LARGE SCALE ANALYSIS] AT SER-118 AND SER-119</scope>
    <scope>IDENTIFICATION BY MASS SPECTROMETRY [LARGE SCALE ANALYSIS]</scope>
</reference>
<gene>
    <name type="primary">Syt17</name>
    <name type="synonym">Bk</name>
</gene>
<keyword id="KW-0221">Differentiation</keyword>
<keyword id="KW-0472">Membrane</keyword>
<keyword id="KW-0597">Phosphoprotein</keyword>
<keyword id="KW-1185">Reference proteome</keyword>
<keyword id="KW-0677">Repeat</keyword>
<comment type="function">
    <text evidence="2">Plays a role in dendrite formation by melanocytes.</text>
</comment>
<comment type="subcellular location">
    <subcellularLocation>
        <location evidence="1">Membrane</location>
        <topology evidence="1">Peripheral membrane protein</topology>
    </subcellularLocation>
</comment>
<comment type="tissue specificity">
    <text evidence="5">Expressed in brain and kidney.</text>
</comment>
<comment type="similarity">
    <text evidence="6">Belongs to the synaptotagmin family.</text>
</comment>
<proteinExistence type="evidence at protein level"/>
<sequence>MAYIQLEPLNEGFLSRISDVLLCGWTCQHCCQRCYESSCCQSSEDEVEILGPFPAQTPPWLMASRSNDKDGDSVHTASDVPLTPRTNSPDGRRSSSDTSKSTYSLTRRISSLDSRRPSSPLIDIKPIEFGVLSAKKEPIQPSVLRRTYTPDDYFRKFEPRLYSLDSNLDDVDSLTDEEIMSKYQLGMLHFSTQYDLLHNHLTVRVIEARDLPPPISHDGSRQDMAHSNPYVKICLLPDQKNSKQTGVKRKTQKPVFEERYTFEIPFLEAQRRTLLLTVVDFDKFSRHCVIGKVAVPLCEVDLVKGGHWWKALIPSSQNEVELGELLLSLNYLPSAGRLNVDIIRAKQLLQTDVSQGSDPFVKIQLVHGLKLVKTKKTSFLRGTIDPFYNESFSFKVPQEELENASLVFTVFGHNMKSSNDFIGRIVIGQYSSGPSESNHWRRMLNTHRTAVEQWHSLRSRAECDRVSPASLEVT</sequence>
<accession>Q62807</accession>
<organism>
    <name type="scientific">Rattus norvegicus</name>
    <name type="common">Rat</name>
    <dbReference type="NCBI Taxonomy" id="10116"/>
    <lineage>
        <taxon>Eukaryota</taxon>
        <taxon>Metazoa</taxon>
        <taxon>Chordata</taxon>
        <taxon>Craniata</taxon>
        <taxon>Vertebrata</taxon>
        <taxon>Euteleostomi</taxon>
        <taxon>Mammalia</taxon>
        <taxon>Eutheria</taxon>
        <taxon>Euarchontoglires</taxon>
        <taxon>Glires</taxon>
        <taxon>Rodentia</taxon>
        <taxon>Myomorpha</taxon>
        <taxon>Muroidea</taxon>
        <taxon>Muridae</taxon>
        <taxon>Murinae</taxon>
        <taxon>Rattus</taxon>
    </lineage>
</organism>
<feature type="chain" id="PRO_0000311939" description="Synaptotagmin-17">
    <location>
        <begin position="1"/>
        <end position="474"/>
    </location>
</feature>
<feature type="domain" description="C2 1" evidence="3">
    <location>
        <begin position="184"/>
        <end position="310"/>
    </location>
</feature>
<feature type="domain" description="C2 2" evidence="3">
    <location>
        <begin position="321"/>
        <end position="455"/>
    </location>
</feature>
<feature type="region of interest" description="Disordered" evidence="4">
    <location>
        <begin position="60"/>
        <end position="117"/>
    </location>
</feature>
<feature type="compositionally biased region" description="Low complexity" evidence="4">
    <location>
        <begin position="96"/>
        <end position="117"/>
    </location>
</feature>
<feature type="modified residue" description="Phosphoserine" evidence="7">
    <location>
        <position position="118"/>
    </location>
</feature>
<feature type="modified residue" description="Phosphoserine" evidence="7">
    <location>
        <position position="119"/>
    </location>
</feature>
<protein>
    <recommendedName>
        <fullName>Synaptotagmin-17</fullName>
    </recommendedName>
    <alternativeName>
        <fullName>Protein B/K</fullName>
    </alternativeName>
    <alternativeName>
        <fullName>Synaptotagmin XVII</fullName>
        <shortName>SytXVII</shortName>
    </alternativeName>
</protein>